<keyword id="KW-0012">Acyltransferase</keyword>
<keyword id="KW-0028">Amino-acid biosynthesis</keyword>
<keyword id="KW-0220">Diaminopimelate biosynthesis</keyword>
<keyword id="KW-0457">Lysine biosynthesis</keyword>
<keyword id="KW-0677">Repeat</keyword>
<keyword id="KW-0808">Transferase</keyword>
<protein>
    <recommendedName>
        <fullName evidence="1">2,3,4,5-tetrahydropyridine-2,6-dicarboxylate N-acetyltransferase</fullName>
        <ecNumber evidence="1">2.3.1.89</ecNumber>
    </recommendedName>
    <alternativeName>
        <fullName evidence="1">Tetrahydrodipicolinate N-acetyltransferase</fullName>
        <shortName evidence="1">THP acetyltransferase</shortName>
        <shortName evidence="1">Tetrahydropicolinate acetylase</shortName>
    </alternativeName>
</protein>
<organism>
    <name type="scientific">Staphylococcus aureus (strain JH9)</name>
    <dbReference type="NCBI Taxonomy" id="359786"/>
    <lineage>
        <taxon>Bacteria</taxon>
        <taxon>Bacillati</taxon>
        <taxon>Bacillota</taxon>
        <taxon>Bacilli</taxon>
        <taxon>Bacillales</taxon>
        <taxon>Staphylococcaceae</taxon>
        <taxon>Staphylococcus</taxon>
    </lineage>
</organism>
<feature type="chain" id="PRO_0000376690" description="2,3,4,5-tetrahydropyridine-2,6-dicarboxylate N-acetyltransferase">
    <location>
        <begin position="1"/>
        <end position="239"/>
    </location>
</feature>
<name>DAPH_STAA9</name>
<accession>A5ISS9</accession>
<dbReference type="EC" id="2.3.1.89" evidence="1"/>
<dbReference type="EMBL" id="CP000703">
    <property type="protein sequence ID" value="ABQ49252.1"/>
    <property type="molecule type" value="Genomic_DNA"/>
</dbReference>
<dbReference type="SMR" id="A5ISS9"/>
<dbReference type="KEGG" id="saj:SaurJH9_1458"/>
<dbReference type="HOGENOM" id="CLU_103751_0_0_9"/>
<dbReference type="UniPathway" id="UPA00034">
    <property type="reaction ID" value="UER00022"/>
</dbReference>
<dbReference type="GO" id="GO:0047200">
    <property type="term" value="F:tetrahydrodipicolinate N-acetyltransferase activity"/>
    <property type="evidence" value="ECO:0007669"/>
    <property type="project" value="UniProtKB-EC"/>
</dbReference>
<dbReference type="GO" id="GO:0019877">
    <property type="term" value="P:diaminopimelate biosynthetic process"/>
    <property type="evidence" value="ECO:0007669"/>
    <property type="project" value="UniProtKB-UniRule"/>
</dbReference>
<dbReference type="GO" id="GO:0009089">
    <property type="term" value="P:lysine biosynthetic process via diaminopimelate"/>
    <property type="evidence" value="ECO:0007669"/>
    <property type="project" value="UniProtKB-UniRule"/>
</dbReference>
<dbReference type="CDD" id="cd03350">
    <property type="entry name" value="LbH_THP_succinylT"/>
    <property type="match status" value="1"/>
</dbReference>
<dbReference type="Gene3D" id="2.160.10.10">
    <property type="entry name" value="Hexapeptide repeat proteins"/>
    <property type="match status" value="1"/>
</dbReference>
<dbReference type="Gene3D" id="3.30.70.250">
    <property type="entry name" value="Malonyl-CoA ACP transacylase, ACP-binding"/>
    <property type="match status" value="1"/>
</dbReference>
<dbReference type="HAMAP" id="MF_01691">
    <property type="entry name" value="DapH"/>
    <property type="match status" value="1"/>
</dbReference>
<dbReference type="InterPro" id="IPR019873">
    <property type="entry name" value="DapH"/>
</dbReference>
<dbReference type="InterPro" id="IPR013710">
    <property type="entry name" value="DapH_N"/>
</dbReference>
<dbReference type="InterPro" id="IPR001451">
    <property type="entry name" value="Hexapep"/>
</dbReference>
<dbReference type="InterPro" id="IPR018357">
    <property type="entry name" value="Hexapep_transf_CS"/>
</dbReference>
<dbReference type="InterPro" id="IPR050179">
    <property type="entry name" value="Trans_hexapeptide_repeat"/>
</dbReference>
<dbReference type="InterPro" id="IPR011004">
    <property type="entry name" value="Trimer_LpxA-like_sf"/>
</dbReference>
<dbReference type="NCBIfam" id="TIGR03532">
    <property type="entry name" value="DapD_Ac"/>
    <property type="match status" value="1"/>
</dbReference>
<dbReference type="PANTHER" id="PTHR43300:SF10">
    <property type="entry name" value="2,3,4,5-TETRAHYDROPYRIDINE-2,6-DICARBOXYLATE N-ACETYLTRANSFERASE"/>
    <property type="match status" value="1"/>
</dbReference>
<dbReference type="PANTHER" id="PTHR43300">
    <property type="entry name" value="ACETYLTRANSFERASE"/>
    <property type="match status" value="1"/>
</dbReference>
<dbReference type="Pfam" id="PF08503">
    <property type="entry name" value="DapH_N"/>
    <property type="match status" value="1"/>
</dbReference>
<dbReference type="Pfam" id="PF00132">
    <property type="entry name" value="Hexapep"/>
    <property type="match status" value="1"/>
</dbReference>
<dbReference type="Pfam" id="PF14602">
    <property type="entry name" value="Hexapep_2"/>
    <property type="match status" value="1"/>
</dbReference>
<dbReference type="SUPFAM" id="SSF51161">
    <property type="entry name" value="Trimeric LpxA-like enzymes"/>
    <property type="match status" value="1"/>
</dbReference>
<dbReference type="PROSITE" id="PS00101">
    <property type="entry name" value="HEXAPEP_TRANSFERASES"/>
    <property type="match status" value="1"/>
</dbReference>
<sequence>MVQHLTAEEIIQYISDAKKSTPIKVYLNGNFEGITYPESFKVFGSEQSKVIFCEADDWKPFYEAYGSQFEDIEIEMDRRNSAIPLKDLTNTNARIEPGAFIREQAIIEDGAVVMMGATINIGAVVGEGTMIDMNATLGGRATTGKNVHVGAGAVLAGVIEPPSASPVIIEDDVLIGANAVILEGVRVGKGAIVAAGAIVTQDVPAGAVVAGTPAKVIKQASEVQDTKKEIVAALRKLND</sequence>
<gene>
    <name evidence="1" type="primary">dapH</name>
    <name type="ordered locus">SaurJH9_1458</name>
</gene>
<evidence type="ECO:0000255" key="1">
    <source>
        <dbReference type="HAMAP-Rule" id="MF_01691"/>
    </source>
</evidence>
<comment type="function">
    <text evidence="1">Catalyzes the transfer of an acetyl group from acetyl-CoA to tetrahydrodipicolinate.</text>
</comment>
<comment type="catalytic activity">
    <reaction evidence="1">
        <text>(S)-2,3,4,5-tetrahydrodipicolinate + acetyl-CoA + H2O = L-2-acetamido-6-oxoheptanedioate + CoA</text>
        <dbReference type="Rhea" id="RHEA:13085"/>
        <dbReference type="ChEBI" id="CHEBI:15377"/>
        <dbReference type="ChEBI" id="CHEBI:16845"/>
        <dbReference type="ChEBI" id="CHEBI:57287"/>
        <dbReference type="ChEBI" id="CHEBI:57288"/>
        <dbReference type="ChEBI" id="CHEBI:58117"/>
        <dbReference type="EC" id="2.3.1.89"/>
    </reaction>
</comment>
<comment type="pathway">
    <text evidence="1">Amino-acid biosynthesis; L-lysine biosynthesis via DAP pathway; LL-2,6-diaminopimelate from (S)-tetrahydrodipicolinate (acetylase route): step 1/3.</text>
</comment>
<comment type="similarity">
    <text evidence="1">Belongs to the transferase hexapeptide repeat family. DapH subfamily.</text>
</comment>
<proteinExistence type="inferred from homology"/>
<reference key="1">
    <citation type="submission" date="2007-05" db="EMBL/GenBank/DDBJ databases">
        <title>Complete sequence of chromosome of Staphylococcus aureus subsp. aureus JH9.</title>
        <authorList>
            <consortium name="US DOE Joint Genome Institute"/>
            <person name="Copeland A."/>
            <person name="Lucas S."/>
            <person name="Lapidus A."/>
            <person name="Barry K."/>
            <person name="Detter J.C."/>
            <person name="Glavina del Rio T."/>
            <person name="Hammon N."/>
            <person name="Israni S."/>
            <person name="Pitluck S."/>
            <person name="Chain P."/>
            <person name="Malfatti S."/>
            <person name="Shin M."/>
            <person name="Vergez L."/>
            <person name="Schmutz J."/>
            <person name="Larimer F."/>
            <person name="Land M."/>
            <person name="Hauser L."/>
            <person name="Kyrpides N."/>
            <person name="Kim E."/>
            <person name="Tomasz A."/>
            <person name="Richardson P."/>
        </authorList>
    </citation>
    <scope>NUCLEOTIDE SEQUENCE [LARGE SCALE GENOMIC DNA]</scope>
    <source>
        <strain>JH9</strain>
    </source>
</reference>